<dbReference type="EMBL" id="BC083717">
    <property type="protein sequence ID" value="AAH83717.1"/>
    <property type="molecule type" value="mRNA"/>
</dbReference>
<dbReference type="RefSeq" id="NP_001012160.1">
    <property type="nucleotide sequence ID" value="NM_001012160.1"/>
</dbReference>
<dbReference type="RefSeq" id="XP_006253621.1">
    <property type="nucleotide sequence ID" value="XM_006253559.3"/>
</dbReference>
<dbReference type="RefSeq" id="XP_017456077.1">
    <property type="nucleotide sequence ID" value="XM_017600588.1"/>
</dbReference>
<dbReference type="SMR" id="Q5XIG5"/>
<dbReference type="BioGRID" id="262511">
    <property type="interactions" value="1"/>
</dbReference>
<dbReference type="FunCoup" id="Q5XIG5">
    <property type="interactions" value="1276"/>
</dbReference>
<dbReference type="IntAct" id="Q5XIG5">
    <property type="interactions" value="2"/>
</dbReference>
<dbReference type="STRING" id="10116.ENSRNOP00000075132"/>
<dbReference type="iPTMnet" id="Q5XIG5"/>
<dbReference type="PhosphoSitePlus" id="Q5XIG5"/>
<dbReference type="PaxDb" id="10116-ENSRNOP00000026070"/>
<dbReference type="GeneID" id="361202"/>
<dbReference type="KEGG" id="rno:361202"/>
<dbReference type="UCSC" id="RGD:1306955">
    <property type="organism name" value="rat"/>
</dbReference>
<dbReference type="AGR" id="RGD:1306955"/>
<dbReference type="CTD" id="80318"/>
<dbReference type="RGD" id="1306955">
    <property type="gene designation" value="Gkap1"/>
</dbReference>
<dbReference type="VEuPathDB" id="HostDB:ENSRNOG00000019272"/>
<dbReference type="eggNOG" id="ENOG502QUT6">
    <property type="taxonomic scope" value="Eukaryota"/>
</dbReference>
<dbReference type="HOGENOM" id="CLU_065161_1_0_1"/>
<dbReference type="InParanoid" id="Q5XIG5"/>
<dbReference type="OrthoDB" id="61460at9989"/>
<dbReference type="PhylomeDB" id="Q5XIG5"/>
<dbReference type="TreeFam" id="TF328459"/>
<dbReference type="PRO" id="PR:Q5XIG5"/>
<dbReference type="Proteomes" id="UP000002494">
    <property type="component" value="Chromosome 17"/>
</dbReference>
<dbReference type="Bgee" id="ENSRNOG00000019272">
    <property type="expression patterns" value="Expressed in testis and 20 other cell types or tissues"/>
</dbReference>
<dbReference type="GO" id="GO:0005794">
    <property type="term" value="C:Golgi apparatus"/>
    <property type="evidence" value="ECO:0000266"/>
    <property type="project" value="RGD"/>
</dbReference>
<dbReference type="GO" id="GO:0042802">
    <property type="term" value="F:identical protein binding"/>
    <property type="evidence" value="ECO:0000266"/>
    <property type="project" value="RGD"/>
</dbReference>
<dbReference type="GO" id="GO:0046628">
    <property type="term" value="P:positive regulation of insulin receptor signaling pathway"/>
    <property type="evidence" value="ECO:0000250"/>
    <property type="project" value="UniProtKB"/>
</dbReference>
<dbReference type="GO" id="GO:0007165">
    <property type="term" value="P:signal transduction"/>
    <property type="evidence" value="ECO:0000266"/>
    <property type="project" value="RGD"/>
</dbReference>
<dbReference type="InterPro" id="IPR026109">
    <property type="entry name" value="GKAP1"/>
</dbReference>
<dbReference type="PANTHER" id="PTHR14899">
    <property type="entry name" value="G KINASE ANCHORING PROTEIN 1"/>
    <property type="match status" value="1"/>
</dbReference>
<dbReference type="PANTHER" id="PTHR14899:SF0">
    <property type="entry name" value="G KINASE-ANCHORING PROTEIN 1"/>
    <property type="match status" value="1"/>
</dbReference>
<dbReference type="PRINTS" id="PR02083">
    <property type="entry name" value="GKINASEAP1"/>
</dbReference>
<comment type="function">
    <text evidence="1">Regulates insulin-dependent IRS1 tyrosine phosphorylation in adipocytes by modulating the availability of IRS1 to IR tyrosine kinase. Its association with IRS1 is required for insulin-induced translocation of SLC2A4 to the cell membrane. Involved in TNF-induced impairment of insulin-dependent IRS1 tyrosine phosphorylation.</text>
</comment>
<comment type="subunit">
    <text evidence="1">Interacts with PRKG1 and IRS1.</text>
</comment>
<comment type="subcellular location">
    <subcellularLocation>
        <location evidence="1">Golgi apparatus</location>
    </subcellularLocation>
</comment>
<comment type="similarity">
    <text evidence="4">Belongs to the GKAP1 family.</text>
</comment>
<sequence>MASAVLSSVLTTASRFALLQVDSGSGSDSEPGKGKGRNNGKSQTLGNKSTANEKKREKRRKKKEQQQSEANELRNLAFKKIPQKSSHSVCNVQHELSLPNPVQKESREENWQEWRQRDEQLTSEMFEADLEKALLLSKLEYEEHRQDYENAENASTQTKVINKKDKRKNHQGKDKPLTVSLKDFQCEDHISKKTEESNSSQPLSHDGGFFNRLEDDVHKILVREKRREQLTEHNGTDNCPAPEHNQEVGLKDGRIERLKLELERKDAEIQKLKAVVTQWEAKYKEVKARNGQLLKMLQEGEMKDKAEILLQVDESQSIKNELTVQVSSLHAALEQERSKVKVLQAELAKYQGGRKGKRNCEPDQCR</sequence>
<accession>Q5XIG5</accession>
<gene>
    <name type="primary">Gkap1</name>
</gene>
<protein>
    <recommendedName>
        <fullName>G kinase-anchoring protein 1</fullName>
    </recommendedName>
</protein>
<reference key="1">
    <citation type="journal article" date="2004" name="Genome Res.">
        <title>The status, quality, and expansion of the NIH full-length cDNA project: the Mammalian Gene Collection (MGC).</title>
        <authorList>
            <consortium name="The MGC Project Team"/>
        </authorList>
    </citation>
    <scope>NUCLEOTIDE SEQUENCE [LARGE SCALE MRNA]</scope>
    <source>
        <tissue>Heart</tissue>
    </source>
</reference>
<reference key="2">
    <citation type="journal article" date="2012" name="Nat. Commun.">
        <title>Quantitative maps of protein phosphorylation sites across 14 different rat organs and tissues.</title>
        <authorList>
            <person name="Lundby A."/>
            <person name="Secher A."/>
            <person name="Lage K."/>
            <person name="Nordsborg N.B."/>
            <person name="Dmytriyev A."/>
            <person name="Lundby C."/>
            <person name="Olsen J.V."/>
        </authorList>
    </citation>
    <scope>PHOSPHORYLATION [LARGE SCALE ANALYSIS] AT SER-23; SER-25 AND SER-27</scope>
    <scope>IDENTIFICATION BY MASS SPECTROMETRY [LARGE SCALE ANALYSIS]</scope>
</reference>
<feature type="chain" id="PRO_0000315656" description="G kinase-anchoring protein 1">
    <location>
        <begin position="1"/>
        <end position="366"/>
    </location>
</feature>
<feature type="region of interest" description="Interaction with IRS1" evidence="1">
    <location>
        <begin position="1"/>
        <end position="95"/>
    </location>
</feature>
<feature type="region of interest" description="Disordered" evidence="3">
    <location>
        <begin position="20"/>
        <end position="105"/>
    </location>
</feature>
<feature type="coiled-coil region" evidence="2">
    <location>
        <begin position="46"/>
        <end position="77"/>
    </location>
</feature>
<feature type="coiled-coil region" evidence="2">
    <location>
        <begin position="129"/>
        <end position="160"/>
    </location>
</feature>
<feature type="coiled-coil region" evidence="2">
    <location>
        <begin position="250"/>
        <end position="299"/>
    </location>
</feature>
<feature type="coiled-coil region" evidence="2">
    <location>
        <begin position="326"/>
        <end position="353"/>
    </location>
</feature>
<feature type="compositionally biased region" description="Polar residues" evidence="3">
    <location>
        <begin position="39"/>
        <end position="50"/>
    </location>
</feature>
<feature type="modified residue" description="Phosphoserine" evidence="5">
    <location>
        <position position="23"/>
    </location>
</feature>
<feature type="modified residue" description="Phosphoserine" evidence="5">
    <location>
        <position position="25"/>
    </location>
</feature>
<feature type="modified residue" description="Phosphoserine" evidence="5">
    <location>
        <position position="27"/>
    </location>
</feature>
<feature type="modified residue" description="Phosphoserine; by PKG" evidence="1">
    <location>
        <position position="106"/>
    </location>
</feature>
<evidence type="ECO:0000250" key="1">
    <source>
        <dbReference type="UniProtKB" id="Q9JMB0"/>
    </source>
</evidence>
<evidence type="ECO:0000255" key="2"/>
<evidence type="ECO:0000256" key="3">
    <source>
        <dbReference type="SAM" id="MobiDB-lite"/>
    </source>
</evidence>
<evidence type="ECO:0000305" key="4"/>
<evidence type="ECO:0007744" key="5">
    <source>
    </source>
</evidence>
<name>GKAP1_RAT</name>
<keyword id="KW-0175">Coiled coil</keyword>
<keyword id="KW-0333">Golgi apparatus</keyword>
<keyword id="KW-0597">Phosphoprotein</keyword>
<keyword id="KW-1185">Reference proteome</keyword>
<proteinExistence type="evidence at protein level"/>
<organism>
    <name type="scientific">Rattus norvegicus</name>
    <name type="common">Rat</name>
    <dbReference type="NCBI Taxonomy" id="10116"/>
    <lineage>
        <taxon>Eukaryota</taxon>
        <taxon>Metazoa</taxon>
        <taxon>Chordata</taxon>
        <taxon>Craniata</taxon>
        <taxon>Vertebrata</taxon>
        <taxon>Euteleostomi</taxon>
        <taxon>Mammalia</taxon>
        <taxon>Eutheria</taxon>
        <taxon>Euarchontoglires</taxon>
        <taxon>Glires</taxon>
        <taxon>Rodentia</taxon>
        <taxon>Myomorpha</taxon>
        <taxon>Muroidea</taxon>
        <taxon>Muridae</taxon>
        <taxon>Murinae</taxon>
        <taxon>Rattus</taxon>
    </lineage>
</organism>